<proteinExistence type="evidence at protein level"/>
<dbReference type="EC" id="5.1.1.8" evidence="3"/>
<dbReference type="EMBL" id="CP000032">
    <property type="protein sequence ID" value="AAV97400.1"/>
    <property type="molecule type" value="Genomic_DNA"/>
</dbReference>
<dbReference type="RefSeq" id="WP_011242045.1">
    <property type="nucleotide sequence ID" value="NC_006569.1"/>
</dbReference>
<dbReference type="SMR" id="Q5LKW3"/>
<dbReference type="PaxDb" id="246200-SPOA0266"/>
<dbReference type="KEGG" id="sil:SPOA0266"/>
<dbReference type="eggNOG" id="COG3938">
    <property type="taxonomic scope" value="Bacteria"/>
</dbReference>
<dbReference type="HOGENOM" id="CLU_036729_1_0_5"/>
<dbReference type="OrthoDB" id="181267at2"/>
<dbReference type="Proteomes" id="UP000001023">
    <property type="component" value="Plasmid megaplasmid"/>
</dbReference>
<dbReference type="GO" id="GO:0047580">
    <property type="term" value="F:4-hydroxyproline epimerase activity"/>
    <property type="evidence" value="ECO:0007669"/>
    <property type="project" value="UniProtKB-EC"/>
</dbReference>
<dbReference type="Gene3D" id="3.10.310.10">
    <property type="entry name" value="Diaminopimelate Epimerase, Chain A, domain 1"/>
    <property type="match status" value="2"/>
</dbReference>
<dbReference type="InterPro" id="IPR008794">
    <property type="entry name" value="Pro_racemase_fam"/>
</dbReference>
<dbReference type="PANTHER" id="PTHR33442">
    <property type="entry name" value="TRANS-3-HYDROXY-L-PROLINE DEHYDRATASE"/>
    <property type="match status" value="1"/>
</dbReference>
<dbReference type="PANTHER" id="PTHR33442:SF1">
    <property type="entry name" value="TRANS-3-HYDROXY-L-PROLINE DEHYDRATASE"/>
    <property type="match status" value="1"/>
</dbReference>
<dbReference type="Pfam" id="PF05544">
    <property type="entry name" value="Pro_racemase"/>
    <property type="match status" value="1"/>
</dbReference>
<dbReference type="PIRSF" id="PIRSF029792">
    <property type="entry name" value="Pro_racemase"/>
    <property type="match status" value="1"/>
</dbReference>
<dbReference type="SFLD" id="SFLDS00028">
    <property type="entry name" value="Proline_Racemase"/>
    <property type="match status" value="1"/>
</dbReference>
<dbReference type="SUPFAM" id="SSF54506">
    <property type="entry name" value="Diaminopimelate epimerase-like"/>
    <property type="match status" value="1"/>
</dbReference>
<sequence>MHVIDSHTGGEPTRVILSGGPHLGSGPLSERAARLARESRAFYRSVMLEPRGQPAMVGALLVEPVDPDCITGVIFFDAEAVLGMCGHGTIGLTVTLAHMGRIRAGTHKIETPVGIVEVCLSDANTVTITNIESRRVHRARQVDVDGFGPVTGDVAYGGNWFFIVDPSPIPIERTNIRALSDAALAIRTAVIANGIGGEEGQPIDHVIFYEMSPRSAVHSRSFVFCPDGTYDRSPCGTGSSARLACLAAEGLLNAGEEIIQESVIGSTYRLSYQPGPNGGVIPKITGQAHVMAESTLHFHTDDPYRNGICHAPQ</sequence>
<protein>
    <recommendedName>
        <fullName evidence="4">4-hydroxyproline 2-epimerase</fullName>
        <shortName>4Hyp 2-epimerase</shortName>
        <shortName evidence="4">4HypE</shortName>
        <ecNumber evidence="3">5.1.1.8</ecNumber>
    </recommendedName>
</protein>
<keyword id="KW-0413">Isomerase</keyword>
<keyword id="KW-0614">Plasmid</keyword>
<keyword id="KW-1185">Reference proteome</keyword>
<feature type="chain" id="PRO_0000432260" description="4-hydroxyproline 2-epimerase">
    <location>
        <begin position="1"/>
        <end position="313"/>
    </location>
</feature>
<feature type="region of interest" description="Disordered" evidence="2">
    <location>
        <begin position="1"/>
        <end position="23"/>
    </location>
</feature>
<feature type="active site" description="Proton acceptor" evidence="1">
    <location>
        <position position="85"/>
    </location>
</feature>
<feature type="active site" description="Proton donor" evidence="1">
    <location>
        <position position="235"/>
    </location>
</feature>
<feature type="binding site" evidence="1">
    <location>
        <begin position="86"/>
        <end position="87"/>
    </location>
    <ligand>
        <name>substrate</name>
    </ligand>
</feature>
<feature type="binding site" evidence="1">
    <location>
        <position position="205"/>
    </location>
    <ligand>
        <name>substrate</name>
    </ligand>
</feature>
<feature type="binding site" evidence="1">
    <location>
        <position position="231"/>
    </location>
    <ligand>
        <name>substrate</name>
    </ligand>
</feature>
<feature type="binding site" evidence="1">
    <location>
        <begin position="236"/>
        <end position="237"/>
    </location>
    <ligand>
        <name>substrate</name>
    </ligand>
</feature>
<reference key="1">
    <citation type="journal article" date="2004" name="Nature">
        <title>Genome sequence of Silicibacter pomeroyi reveals adaptations to the marine environment.</title>
        <authorList>
            <person name="Moran M.A."/>
            <person name="Buchan A."/>
            <person name="Gonzalez J.M."/>
            <person name="Heidelberg J.F."/>
            <person name="Whitman W.B."/>
            <person name="Kiene R.P."/>
            <person name="Henriksen J.R."/>
            <person name="King G.M."/>
            <person name="Belas R."/>
            <person name="Fuqua C."/>
            <person name="Brinkac L.M."/>
            <person name="Lewis M."/>
            <person name="Johri S."/>
            <person name="Weaver B."/>
            <person name="Pai G."/>
            <person name="Eisen J.A."/>
            <person name="Rahe E."/>
            <person name="Sheldon W.M."/>
            <person name="Ye W."/>
            <person name="Miller T.R."/>
            <person name="Carlton J."/>
            <person name="Rasko D.A."/>
            <person name="Paulsen I.T."/>
            <person name="Ren Q."/>
            <person name="Daugherty S.C."/>
            <person name="DeBoy R.T."/>
            <person name="Dodson R.J."/>
            <person name="Durkin A.S."/>
            <person name="Madupu R."/>
            <person name="Nelson W.C."/>
            <person name="Sullivan S.A."/>
            <person name="Rosovitz M.J."/>
            <person name="Haft D.H."/>
            <person name="Selengut J."/>
            <person name="Ward N."/>
        </authorList>
    </citation>
    <scope>NUCLEOTIDE SEQUENCE [LARGE SCALE GENOMIC DNA]</scope>
    <source>
        <strain>ATCC 700808 / DSM 15171 / DSS-3</strain>
    </source>
</reference>
<reference key="2">
    <citation type="journal article" date="2014" name="Stand. Genomic Sci.">
        <title>An updated genome annotation for the model marine bacterium Ruegeria pomeroyi DSS-3.</title>
        <authorList>
            <person name="Rivers A.R."/>
            <person name="Smith C.B."/>
            <person name="Moran M.A."/>
        </authorList>
    </citation>
    <scope>GENOME REANNOTATION</scope>
    <source>
        <strain>ATCC 700808 / DSM 15171 / DSS-3</strain>
    </source>
</reference>
<reference key="3">
    <citation type="journal article" date="2014" name="Elife">
        <title>Prediction and characterization of enzymatic activities guided by sequence similarity and genome neighborhood networks.</title>
        <authorList>
            <person name="Zhao S."/>
            <person name="Sakai A."/>
            <person name="Zhang X."/>
            <person name="Vetting M.W."/>
            <person name="Kumar R."/>
            <person name="Hillerich B."/>
            <person name="San Francisco B."/>
            <person name="Solbiati J."/>
            <person name="Steves A."/>
            <person name="Brown S."/>
            <person name="Akiva E."/>
            <person name="Barber A."/>
            <person name="Seidel R.D."/>
            <person name="Babbitt P.C."/>
            <person name="Almo S.C."/>
            <person name="Gerlt J.A."/>
            <person name="Jacobson M.P."/>
        </authorList>
    </citation>
    <scope>FUNCTION</scope>
    <scope>CATALYTIC ACTIVITY</scope>
</reference>
<organism>
    <name type="scientific">Ruegeria pomeroyi (strain ATCC 700808 / DSM 15171 / DSS-3)</name>
    <name type="common">Silicibacter pomeroyi</name>
    <dbReference type="NCBI Taxonomy" id="246200"/>
    <lineage>
        <taxon>Bacteria</taxon>
        <taxon>Pseudomonadati</taxon>
        <taxon>Pseudomonadota</taxon>
        <taxon>Alphaproteobacteria</taxon>
        <taxon>Rhodobacterales</taxon>
        <taxon>Roseobacteraceae</taxon>
        <taxon>Ruegeria</taxon>
    </lineage>
</organism>
<evidence type="ECO:0000250" key="1">
    <source>
        <dbReference type="UniProtKB" id="Q4KGU2"/>
    </source>
</evidence>
<evidence type="ECO:0000256" key="2">
    <source>
        <dbReference type="SAM" id="MobiDB-lite"/>
    </source>
</evidence>
<evidence type="ECO:0000269" key="3">
    <source>
    </source>
</evidence>
<evidence type="ECO:0000303" key="4">
    <source>
    </source>
</evidence>
<evidence type="ECO:0000305" key="5"/>
<evidence type="ECO:0000312" key="6">
    <source>
        <dbReference type="EMBL" id="AAV97400.1"/>
    </source>
</evidence>
<geneLocation type="plasmid">
    <name>megaplasmid Spo</name>
</geneLocation>
<comment type="function">
    <text evidence="3 5">Catalyzes the epimerization of trans-4-hydroxy-L-proline (t4LHyp) to cis-4-hydroxy-D-proline (c4DHyp). Is likely involved in a degradation pathway that converts t4LHyp to alpha-ketoglutarate. Displays no proline racemase activity.</text>
</comment>
<comment type="catalytic activity">
    <reaction evidence="3">
        <text>trans-4-hydroxy-L-proline = cis-4-hydroxy-D-proline</text>
        <dbReference type="Rhea" id="RHEA:21152"/>
        <dbReference type="ChEBI" id="CHEBI:57690"/>
        <dbReference type="ChEBI" id="CHEBI:58375"/>
        <dbReference type="EC" id="5.1.1.8"/>
    </reaction>
</comment>
<comment type="similarity">
    <text evidence="5">Belongs to the proline racemase family.</text>
</comment>
<gene>
    <name evidence="6" type="ordered locus">SPOA0266</name>
</gene>
<name>4HYPE_RUEPO</name>
<accession>Q5LKW3</accession>